<feature type="chain" id="PRO_0000120792" description="Uracil phosphoribosyltransferase">
    <location>
        <begin position="1"/>
        <end position="208"/>
    </location>
</feature>
<feature type="binding site" evidence="1">
    <location>
        <position position="77"/>
    </location>
    <ligand>
        <name>5-phospho-alpha-D-ribose 1-diphosphate</name>
        <dbReference type="ChEBI" id="CHEBI:58017"/>
    </ligand>
</feature>
<feature type="binding site" evidence="1">
    <location>
        <position position="102"/>
    </location>
    <ligand>
        <name>5-phospho-alpha-D-ribose 1-diphosphate</name>
        <dbReference type="ChEBI" id="CHEBI:58017"/>
    </ligand>
</feature>
<feature type="binding site" evidence="1">
    <location>
        <begin position="128"/>
        <end position="136"/>
    </location>
    <ligand>
        <name>5-phospho-alpha-D-ribose 1-diphosphate</name>
        <dbReference type="ChEBI" id="CHEBI:58017"/>
    </ligand>
</feature>
<feature type="binding site" evidence="1">
    <location>
        <position position="191"/>
    </location>
    <ligand>
        <name>uracil</name>
        <dbReference type="ChEBI" id="CHEBI:17568"/>
    </ligand>
</feature>
<feature type="binding site" evidence="1">
    <location>
        <begin position="196"/>
        <end position="198"/>
    </location>
    <ligand>
        <name>uracil</name>
        <dbReference type="ChEBI" id="CHEBI:17568"/>
    </ligand>
</feature>
<feature type="binding site" evidence="1">
    <location>
        <position position="197"/>
    </location>
    <ligand>
        <name>5-phospho-alpha-D-ribose 1-diphosphate</name>
        <dbReference type="ChEBI" id="CHEBI:58017"/>
    </ligand>
</feature>
<feature type="strand" evidence="2">
    <location>
        <begin position="2"/>
        <end position="4"/>
    </location>
</feature>
<feature type="helix" evidence="2">
    <location>
        <begin position="8"/>
        <end position="18"/>
    </location>
</feature>
<feature type="helix" evidence="2">
    <location>
        <begin position="24"/>
        <end position="42"/>
    </location>
</feature>
<feature type="turn" evidence="2">
    <location>
        <begin position="43"/>
        <end position="45"/>
    </location>
</feature>
<feature type="strand" evidence="2">
    <location>
        <begin position="49"/>
        <end position="55"/>
    </location>
</feature>
<feature type="strand" evidence="2">
    <location>
        <begin position="58"/>
        <end position="64"/>
    </location>
</feature>
<feature type="helix" evidence="2">
    <location>
        <begin position="67"/>
        <end position="69"/>
    </location>
</feature>
<feature type="strand" evidence="2">
    <location>
        <begin position="70"/>
        <end position="76"/>
    </location>
</feature>
<feature type="turn" evidence="2">
    <location>
        <begin position="77"/>
        <end position="79"/>
    </location>
</feature>
<feature type="helix" evidence="2">
    <location>
        <begin position="80"/>
        <end position="89"/>
    </location>
</feature>
<feature type="strand" evidence="2">
    <location>
        <begin position="97"/>
        <end position="102"/>
    </location>
</feature>
<feature type="turn" evidence="2">
    <location>
        <begin position="104"/>
        <end position="106"/>
    </location>
</feature>
<feature type="strand" evidence="2">
    <location>
        <begin position="109"/>
        <end position="115"/>
    </location>
</feature>
<feature type="strand" evidence="2">
    <location>
        <begin position="122"/>
        <end position="127"/>
    </location>
</feature>
<feature type="strand" evidence="2">
    <location>
        <begin position="129"/>
        <end position="134"/>
    </location>
</feature>
<feature type="helix" evidence="2">
    <location>
        <begin position="135"/>
        <end position="145"/>
    </location>
</feature>
<feature type="strand" evidence="2">
    <location>
        <begin position="149"/>
        <end position="159"/>
    </location>
</feature>
<feature type="helix" evidence="2">
    <location>
        <begin position="161"/>
        <end position="170"/>
    </location>
</feature>
<feature type="strand" evidence="2">
    <location>
        <begin position="174"/>
        <end position="181"/>
    </location>
</feature>
<feature type="strand" evidence="2">
    <location>
        <begin position="183"/>
        <end position="185"/>
    </location>
</feature>
<feature type="strand" evidence="2">
    <location>
        <begin position="191"/>
        <end position="194"/>
    </location>
</feature>
<feature type="helix" evidence="2">
    <location>
        <begin position="198"/>
        <end position="203"/>
    </location>
</feature>
<name>UPP_AQUAE</name>
<sequence>MIVELSHPLIKHKVNTARIQDTSAEKLRKTLKELGFMLVYEALKDILLEEKEVRTWIGNKRFNYLNEEEIVFVPILRAGLSFLEGALQVVPNAKVGFLGIKRNEETLESHIYYSRLPELKGKIVVILDPMLATGGTLEVALREILKHSPLKVKSVHAIAAPEGLKRIEEKFKEVEIFVGNVDERLNDKGYIIPGLGDIGDRLYAVSVY</sequence>
<accession>O67914</accession>
<proteinExistence type="evidence at protein level"/>
<dbReference type="EC" id="2.4.2.9" evidence="1"/>
<dbReference type="EMBL" id="AE000657">
    <property type="protein sequence ID" value="AAC07880.1"/>
    <property type="molecule type" value="Genomic_DNA"/>
</dbReference>
<dbReference type="PIR" id="F70485">
    <property type="entry name" value="F70485"/>
</dbReference>
<dbReference type="RefSeq" id="NP_214483.1">
    <property type="nucleotide sequence ID" value="NC_000918.1"/>
</dbReference>
<dbReference type="RefSeq" id="WP_010881419.1">
    <property type="nucleotide sequence ID" value="NC_000918.1"/>
</dbReference>
<dbReference type="PDB" id="2E55">
    <property type="method" value="X-ray"/>
    <property type="resolution" value="2.15 A"/>
    <property type="chains" value="A/B/C/D=1-208"/>
</dbReference>
<dbReference type="PDBsum" id="2E55"/>
<dbReference type="SMR" id="O67914"/>
<dbReference type="FunCoup" id="O67914">
    <property type="interactions" value="427"/>
</dbReference>
<dbReference type="STRING" id="224324.aq_2163"/>
<dbReference type="EnsemblBacteria" id="AAC07880">
    <property type="protein sequence ID" value="AAC07880"/>
    <property type="gene ID" value="aq_2163"/>
</dbReference>
<dbReference type="KEGG" id="aae:aq_2163"/>
<dbReference type="PATRIC" id="fig|224324.8.peg.1671"/>
<dbReference type="eggNOG" id="COG0035">
    <property type="taxonomic scope" value="Bacteria"/>
</dbReference>
<dbReference type="HOGENOM" id="CLU_067096_2_0_0"/>
<dbReference type="InParanoid" id="O67914"/>
<dbReference type="OrthoDB" id="9781675at2"/>
<dbReference type="UniPathway" id="UPA00574">
    <property type="reaction ID" value="UER00636"/>
</dbReference>
<dbReference type="EvolutionaryTrace" id="O67914"/>
<dbReference type="Proteomes" id="UP000000798">
    <property type="component" value="Chromosome"/>
</dbReference>
<dbReference type="GO" id="GO:0005829">
    <property type="term" value="C:cytosol"/>
    <property type="evidence" value="ECO:0000318"/>
    <property type="project" value="GO_Central"/>
</dbReference>
<dbReference type="GO" id="GO:0005525">
    <property type="term" value="F:GTP binding"/>
    <property type="evidence" value="ECO:0007669"/>
    <property type="project" value="UniProtKB-KW"/>
</dbReference>
<dbReference type="GO" id="GO:0004422">
    <property type="term" value="F:hypoxanthine phosphoribosyltransferase activity"/>
    <property type="evidence" value="ECO:0000318"/>
    <property type="project" value="GO_Central"/>
</dbReference>
<dbReference type="GO" id="GO:0000287">
    <property type="term" value="F:magnesium ion binding"/>
    <property type="evidence" value="ECO:0000318"/>
    <property type="project" value="GO_Central"/>
</dbReference>
<dbReference type="GO" id="GO:0004845">
    <property type="term" value="F:uracil phosphoribosyltransferase activity"/>
    <property type="evidence" value="ECO:0007669"/>
    <property type="project" value="UniProtKB-UniRule"/>
</dbReference>
<dbReference type="GO" id="GO:0032263">
    <property type="term" value="P:GMP salvage"/>
    <property type="evidence" value="ECO:0000318"/>
    <property type="project" value="GO_Central"/>
</dbReference>
<dbReference type="GO" id="GO:0006178">
    <property type="term" value="P:guanine salvage"/>
    <property type="evidence" value="ECO:0000318"/>
    <property type="project" value="GO_Central"/>
</dbReference>
<dbReference type="GO" id="GO:0046100">
    <property type="term" value="P:hypoxanthine metabolic process"/>
    <property type="evidence" value="ECO:0000318"/>
    <property type="project" value="GO_Central"/>
</dbReference>
<dbReference type="GO" id="GO:0032264">
    <property type="term" value="P:IMP salvage"/>
    <property type="evidence" value="ECO:0000318"/>
    <property type="project" value="GO_Central"/>
</dbReference>
<dbReference type="GO" id="GO:0044206">
    <property type="term" value="P:UMP salvage"/>
    <property type="evidence" value="ECO:0007669"/>
    <property type="project" value="UniProtKB-UniRule"/>
</dbReference>
<dbReference type="GO" id="GO:0006223">
    <property type="term" value="P:uracil salvage"/>
    <property type="evidence" value="ECO:0007669"/>
    <property type="project" value="InterPro"/>
</dbReference>
<dbReference type="CDD" id="cd06223">
    <property type="entry name" value="PRTases_typeI"/>
    <property type="match status" value="1"/>
</dbReference>
<dbReference type="FunFam" id="3.40.50.2020:FF:000003">
    <property type="entry name" value="Uracil phosphoribosyltransferase"/>
    <property type="match status" value="1"/>
</dbReference>
<dbReference type="Gene3D" id="3.40.50.2020">
    <property type="match status" value="1"/>
</dbReference>
<dbReference type="HAMAP" id="MF_01218_B">
    <property type="entry name" value="Upp_B"/>
    <property type="match status" value="1"/>
</dbReference>
<dbReference type="InterPro" id="IPR000836">
    <property type="entry name" value="PRibTrfase_dom"/>
</dbReference>
<dbReference type="InterPro" id="IPR029057">
    <property type="entry name" value="PRTase-like"/>
</dbReference>
<dbReference type="InterPro" id="IPR034332">
    <property type="entry name" value="Upp_B"/>
</dbReference>
<dbReference type="InterPro" id="IPR050054">
    <property type="entry name" value="UPRTase/APRTase"/>
</dbReference>
<dbReference type="InterPro" id="IPR005765">
    <property type="entry name" value="Ura_phspho_trans"/>
</dbReference>
<dbReference type="NCBIfam" id="NF001097">
    <property type="entry name" value="PRK00129.1"/>
    <property type="match status" value="1"/>
</dbReference>
<dbReference type="NCBIfam" id="TIGR01091">
    <property type="entry name" value="upp"/>
    <property type="match status" value="1"/>
</dbReference>
<dbReference type="PANTHER" id="PTHR32315">
    <property type="entry name" value="ADENINE PHOSPHORIBOSYLTRANSFERASE"/>
    <property type="match status" value="1"/>
</dbReference>
<dbReference type="PANTHER" id="PTHR32315:SF4">
    <property type="entry name" value="URACIL PHOSPHORIBOSYLTRANSFERASE, CHLOROPLASTIC"/>
    <property type="match status" value="1"/>
</dbReference>
<dbReference type="Pfam" id="PF14681">
    <property type="entry name" value="UPRTase"/>
    <property type="match status" value="1"/>
</dbReference>
<dbReference type="SUPFAM" id="SSF53271">
    <property type="entry name" value="PRTase-like"/>
    <property type="match status" value="1"/>
</dbReference>
<evidence type="ECO:0000255" key="1">
    <source>
        <dbReference type="HAMAP-Rule" id="MF_01218"/>
    </source>
</evidence>
<evidence type="ECO:0007829" key="2">
    <source>
        <dbReference type="PDB" id="2E55"/>
    </source>
</evidence>
<organism>
    <name type="scientific">Aquifex aeolicus (strain VF5)</name>
    <dbReference type="NCBI Taxonomy" id="224324"/>
    <lineage>
        <taxon>Bacteria</taxon>
        <taxon>Pseudomonadati</taxon>
        <taxon>Aquificota</taxon>
        <taxon>Aquificia</taxon>
        <taxon>Aquificales</taxon>
        <taxon>Aquificaceae</taxon>
        <taxon>Aquifex</taxon>
    </lineage>
</organism>
<keyword id="KW-0002">3D-structure</keyword>
<keyword id="KW-0021">Allosteric enzyme</keyword>
<keyword id="KW-0328">Glycosyltransferase</keyword>
<keyword id="KW-0342">GTP-binding</keyword>
<keyword id="KW-0460">Magnesium</keyword>
<keyword id="KW-0547">Nucleotide-binding</keyword>
<keyword id="KW-1185">Reference proteome</keyword>
<keyword id="KW-0808">Transferase</keyword>
<protein>
    <recommendedName>
        <fullName evidence="1">Uracil phosphoribosyltransferase</fullName>
        <ecNumber evidence="1">2.4.2.9</ecNumber>
    </recommendedName>
    <alternativeName>
        <fullName evidence="1">UMP pyrophosphorylase</fullName>
    </alternativeName>
    <alternativeName>
        <fullName evidence="1">UPRTase</fullName>
    </alternativeName>
</protein>
<gene>
    <name evidence="1" type="primary">upp</name>
    <name type="synonym">uraP</name>
    <name type="ordered locus">aq_2163</name>
</gene>
<comment type="function">
    <text evidence="1">Catalyzes the conversion of uracil and 5-phospho-alpha-D-ribose 1-diphosphate (PRPP) to UMP and diphosphate.</text>
</comment>
<comment type="catalytic activity">
    <reaction evidence="1">
        <text>UMP + diphosphate = 5-phospho-alpha-D-ribose 1-diphosphate + uracil</text>
        <dbReference type="Rhea" id="RHEA:13017"/>
        <dbReference type="ChEBI" id="CHEBI:17568"/>
        <dbReference type="ChEBI" id="CHEBI:33019"/>
        <dbReference type="ChEBI" id="CHEBI:57865"/>
        <dbReference type="ChEBI" id="CHEBI:58017"/>
        <dbReference type="EC" id="2.4.2.9"/>
    </reaction>
</comment>
<comment type="cofactor">
    <cofactor evidence="1">
        <name>Mg(2+)</name>
        <dbReference type="ChEBI" id="CHEBI:18420"/>
    </cofactor>
    <text evidence="1">Binds 1 Mg(2+) ion per subunit. The magnesium is bound as Mg-PRPP.</text>
</comment>
<comment type="activity regulation">
    <text evidence="1">Allosterically activated by GTP.</text>
</comment>
<comment type="pathway">
    <text evidence="1">Pyrimidine metabolism; UMP biosynthesis via salvage pathway; UMP from uracil: step 1/1.</text>
</comment>
<comment type="similarity">
    <text evidence="1">Belongs to the UPRTase family.</text>
</comment>
<reference key="1">
    <citation type="journal article" date="1998" name="Nature">
        <title>The complete genome of the hyperthermophilic bacterium Aquifex aeolicus.</title>
        <authorList>
            <person name="Deckert G."/>
            <person name="Warren P.V."/>
            <person name="Gaasterland T."/>
            <person name="Young W.G."/>
            <person name="Lenox A.L."/>
            <person name="Graham D.E."/>
            <person name="Overbeek R."/>
            <person name="Snead M.A."/>
            <person name="Keller M."/>
            <person name="Aujay M."/>
            <person name="Huber R."/>
            <person name="Feldman R.A."/>
            <person name="Short J.M."/>
            <person name="Olsen G.J."/>
            <person name="Swanson R.V."/>
        </authorList>
    </citation>
    <scope>NUCLEOTIDE SEQUENCE [LARGE SCALE GENOMIC DNA]</scope>
    <source>
        <strain>VF5</strain>
    </source>
</reference>
<reference key="2">
    <citation type="submission" date="2009-02" db="PDB data bank">
        <title>Structure of aq2163 protein from Aquifex aeolicus.</title>
        <authorList>
            <consortium name="RIKEN structural genomics initiative (RSGI)"/>
        </authorList>
    </citation>
    <scope>X-RAY CRYSTALLOGRAPHY (2.15 ANGSTROMS)</scope>
</reference>